<accession>Q88X36</accession>
<accession>F9UNG2</accession>
<gene>
    <name type="primary">argR1</name>
    <name type="ordered locus">lp_1411</name>
</gene>
<evidence type="ECO:0000250" key="1"/>
<evidence type="ECO:0000305" key="2"/>
<sequence length="153" mass="17126">MKKSERQAVIEQLISEYPIATQEELMAKLKAEGIAATQATISRDIREMQIVKTPDEHGQTRYAIFKTTNKNEQDRLFETLHDVVTSIDRVEFMNIIHTLPSNGNLLAAIIDDLNLPEVSGTLAGHDTIFVVSPNTTVAKQLYESFASHISNED</sequence>
<protein>
    <recommendedName>
        <fullName>Arginine regulator</fullName>
    </recommendedName>
</protein>
<proteinExistence type="inferred from homology"/>
<dbReference type="EMBL" id="AL935263">
    <property type="protein sequence ID" value="CCC78751.1"/>
    <property type="molecule type" value="Genomic_DNA"/>
</dbReference>
<dbReference type="RefSeq" id="YP_004889265.1">
    <property type="nucleotide sequence ID" value="NC_004567.2"/>
</dbReference>
<dbReference type="SMR" id="Q88X36"/>
<dbReference type="STRING" id="220668.lp_1411"/>
<dbReference type="EnsemblBacteria" id="CCC78751">
    <property type="protein sequence ID" value="CCC78751"/>
    <property type="gene ID" value="lp_1411"/>
</dbReference>
<dbReference type="KEGG" id="lpl:lp_1411"/>
<dbReference type="PATRIC" id="fig|220668.9.peg.1183"/>
<dbReference type="eggNOG" id="COG1438">
    <property type="taxonomic scope" value="Bacteria"/>
</dbReference>
<dbReference type="HOGENOM" id="CLU_097103_3_0_9"/>
<dbReference type="OrthoDB" id="9807089at2"/>
<dbReference type="PhylomeDB" id="Q88X36"/>
<dbReference type="UniPathway" id="UPA00254"/>
<dbReference type="Proteomes" id="UP000000432">
    <property type="component" value="Chromosome"/>
</dbReference>
<dbReference type="GO" id="GO:0005737">
    <property type="term" value="C:cytoplasm"/>
    <property type="evidence" value="ECO:0007669"/>
    <property type="project" value="UniProtKB-SubCell"/>
</dbReference>
<dbReference type="GO" id="GO:0034618">
    <property type="term" value="F:arginine binding"/>
    <property type="evidence" value="ECO:0007669"/>
    <property type="project" value="InterPro"/>
</dbReference>
<dbReference type="GO" id="GO:0003677">
    <property type="term" value="F:DNA binding"/>
    <property type="evidence" value="ECO:0007669"/>
    <property type="project" value="UniProtKB-KW"/>
</dbReference>
<dbReference type="GO" id="GO:0003700">
    <property type="term" value="F:DNA-binding transcription factor activity"/>
    <property type="evidence" value="ECO:0007669"/>
    <property type="project" value="UniProtKB-UniRule"/>
</dbReference>
<dbReference type="GO" id="GO:0019547">
    <property type="term" value="P:arginine catabolic process to ornithine"/>
    <property type="evidence" value="ECO:0007669"/>
    <property type="project" value="UniProtKB-UniPathway"/>
</dbReference>
<dbReference type="GO" id="GO:0051259">
    <property type="term" value="P:protein complex oligomerization"/>
    <property type="evidence" value="ECO:0007669"/>
    <property type="project" value="InterPro"/>
</dbReference>
<dbReference type="GO" id="GO:1900079">
    <property type="term" value="P:regulation of arginine biosynthetic process"/>
    <property type="evidence" value="ECO:0007669"/>
    <property type="project" value="UniProtKB-UniRule"/>
</dbReference>
<dbReference type="Gene3D" id="3.30.1360.40">
    <property type="match status" value="1"/>
</dbReference>
<dbReference type="Gene3D" id="1.10.10.10">
    <property type="entry name" value="Winged helix-like DNA-binding domain superfamily/Winged helix DNA-binding domain"/>
    <property type="match status" value="1"/>
</dbReference>
<dbReference type="HAMAP" id="MF_00173">
    <property type="entry name" value="Arg_repressor"/>
    <property type="match status" value="1"/>
</dbReference>
<dbReference type="InterPro" id="IPR001669">
    <property type="entry name" value="Arg_repress"/>
</dbReference>
<dbReference type="InterPro" id="IPR020899">
    <property type="entry name" value="Arg_repress_C"/>
</dbReference>
<dbReference type="InterPro" id="IPR036251">
    <property type="entry name" value="Arg_repress_C_sf"/>
</dbReference>
<dbReference type="InterPro" id="IPR020900">
    <property type="entry name" value="Arg_repress_DNA-bd"/>
</dbReference>
<dbReference type="InterPro" id="IPR036388">
    <property type="entry name" value="WH-like_DNA-bd_sf"/>
</dbReference>
<dbReference type="InterPro" id="IPR036390">
    <property type="entry name" value="WH_DNA-bd_sf"/>
</dbReference>
<dbReference type="NCBIfam" id="TIGR01529">
    <property type="entry name" value="argR_whole"/>
    <property type="match status" value="1"/>
</dbReference>
<dbReference type="PANTHER" id="PTHR34471">
    <property type="entry name" value="ARGININE REPRESSOR"/>
    <property type="match status" value="1"/>
</dbReference>
<dbReference type="PANTHER" id="PTHR34471:SF1">
    <property type="entry name" value="ARGININE REPRESSOR"/>
    <property type="match status" value="1"/>
</dbReference>
<dbReference type="Pfam" id="PF01316">
    <property type="entry name" value="Arg_repressor"/>
    <property type="match status" value="1"/>
</dbReference>
<dbReference type="Pfam" id="PF02863">
    <property type="entry name" value="Arg_repressor_C"/>
    <property type="match status" value="1"/>
</dbReference>
<dbReference type="PRINTS" id="PR01467">
    <property type="entry name" value="ARGREPRESSOR"/>
</dbReference>
<dbReference type="SUPFAM" id="SSF55252">
    <property type="entry name" value="C-terminal domain of arginine repressor"/>
    <property type="match status" value="1"/>
</dbReference>
<dbReference type="SUPFAM" id="SSF46785">
    <property type="entry name" value="Winged helix' DNA-binding domain"/>
    <property type="match status" value="1"/>
</dbReference>
<reference key="1">
    <citation type="journal article" date="2003" name="Proc. Natl. Acad. Sci. U.S.A.">
        <title>Complete genome sequence of Lactobacillus plantarum WCFS1.</title>
        <authorList>
            <person name="Kleerebezem M."/>
            <person name="Boekhorst J."/>
            <person name="van Kranenburg R."/>
            <person name="Molenaar D."/>
            <person name="Kuipers O.P."/>
            <person name="Leer R."/>
            <person name="Tarchini R."/>
            <person name="Peters S.A."/>
            <person name="Sandbrink H.M."/>
            <person name="Fiers M.W.E.J."/>
            <person name="Stiekema W."/>
            <person name="Klein Lankhorst R.M."/>
            <person name="Bron P.A."/>
            <person name="Hoffer S.M."/>
            <person name="Nierop Groot M.N."/>
            <person name="Kerkhoven R."/>
            <person name="De Vries M."/>
            <person name="Ursing B."/>
            <person name="De Vos W.M."/>
            <person name="Siezen R.J."/>
        </authorList>
    </citation>
    <scope>NUCLEOTIDE SEQUENCE [LARGE SCALE GENOMIC DNA]</scope>
    <source>
        <strain>ATCC BAA-793 / NCIMB 8826 / WCFS1</strain>
    </source>
</reference>
<reference key="2">
    <citation type="journal article" date="2012" name="J. Bacteriol.">
        <title>Complete resequencing and reannotation of the Lactobacillus plantarum WCFS1 genome.</title>
        <authorList>
            <person name="Siezen R.J."/>
            <person name="Francke C."/>
            <person name="Renckens B."/>
            <person name="Boekhorst J."/>
            <person name="Wels M."/>
            <person name="Kleerebezem M."/>
            <person name="van Hijum S.A."/>
        </authorList>
    </citation>
    <scope>NUCLEOTIDE SEQUENCE [LARGE SCALE GENOMIC DNA]</scope>
    <scope>GENOME REANNOTATION</scope>
    <source>
        <strain>ATCC BAA-793 / NCIMB 8826 / WCFS1</strain>
    </source>
</reference>
<name>ARGR1_LACPL</name>
<comment type="function">
    <text evidence="1">Regulates the transcription of the arc operon, involved in arginine catabolism.</text>
</comment>
<comment type="pathway">
    <text>Amino-acid degradation; L-arginine degradation via ADI pathway.</text>
</comment>
<comment type="subcellular location">
    <subcellularLocation>
        <location evidence="1">Cytoplasm</location>
    </subcellularLocation>
</comment>
<comment type="similarity">
    <text evidence="2">Belongs to the ArgR family.</text>
</comment>
<keyword id="KW-0056">Arginine metabolism</keyword>
<keyword id="KW-0963">Cytoplasm</keyword>
<keyword id="KW-0238">DNA-binding</keyword>
<keyword id="KW-1185">Reference proteome</keyword>
<keyword id="KW-0804">Transcription</keyword>
<keyword id="KW-0805">Transcription regulation</keyword>
<feature type="chain" id="PRO_0000205095" description="Arginine regulator">
    <location>
        <begin position="1"/>
        <end position="153"/>
    </location>
</feature>
<organism>
    <name type="scientific">Lactiplantibacillus plantarum (strain ATCC BAA-793 / NCIMB 8826 / WCFS1)</name>
    <name type="common">Lactobacillus plantarum</name>
    <dbReference type="NCBI Taxonomy" id="220668"/>
    <lineage>
        <taxon>Bacteria</taxon>
        <taxon>Bacillati</taxon>
        <taxon>Bacillota</taxon>
        <taxon>Bacilli</taxon>
        <taxon>Lactobacillales</taxon>
        <taxon>Lactobacillaceae</taxon>
        <taxon>Lactiplantibacillus</taxon>
    </lineage>
</organism>